<proteinExistence type="inferred from homology"/>
<protein>
    <recommendedName>
        <fullName evidence="1">3-dehydroquinate dehydratase</fullName>
        <shortName evidence="1">3-dehydroquinase</shortName>
        <ecNumber evidence="1">4.2.1.10</ecNumber>
    </recommendedName>
    <alternativeName>
        <fullName evidence="1">Type I DHQase</fullName>
    </alternativeName>
    <alternativeName>
        <fullName evidence="1">Type I dehydroquinase</fullName>
        <shortName evidence="1">DHQ1</shortName>
    </alternativeName>
</protein>
<sequence>MRRTKIVVPIMLTELTELEKVSVSDYLSADIVEWRADFLSADDIFEMAPKFFEKFKESKILFTLRTVREGGNIQVSEKKYLQILQEILKFEPDYIDVEYFSHGPSFAALKNYREKIVLSYHNFDEVPTDLTSRLIKMHEEGTAFVKVAVMPERECDVLDLLQITRDMTLEYGNHFISMAMGDLGRLSRISGYLTGSCWTFAGLENSSAPGQISLKETVEILDLLENELA</sequence>
<comment type="function">
    <text evidence="1">Involved in the third step of the chorismate pathway, which leads to the biosynthesis of aromatic amino acids. Catalyzes the cis-dehydration of 3-dehydroquinate (DHQ) and introduces the first double bond of the aromatic ring to yield 3-dehydroshikimate.</text>
</comment>
<comment type="catalytic activity">
    <reaction evidence="1">
        <text>3-dehydroquinate = 3-dehydroshikimate + H2O</text>
        <dbReference type="Rhea" id="RHEA:21096"/>
        <dbReference type="ChEBI" id="CHEBI:15377"/>
        <dbReference type="ChEBI" id="CHEBI:16630"/>
        <dbReference type="ChEBI" id="CHEBI:32364"/>
        <dbReference type="EC" id="4.2.1.10"/>
    </reaction>
</comment>
<comment type="pathway">
    <text evidence="1">Metabolic intermediate biosynthesis; chorismate biosynthesis; chorismate from D-erythrose 4-phosphate and phosphoenolpyruvate: step 3/7.</text>
</comment>
<comment type="subunit">
    <text evidence="1">Homodimer.</text>
</comment>
<comment type="similarity">
    <text evidence="1">Belongs to the type-I 3-dehydroquinase family.</text>
</comment>
<feature type="chain" id="PRO_1000043168" description="3-dehydroquinate dehydratase">
    <location>
        <begin position="1"/>
        <end position="229"/>
    </location>
</feature>
<feature type="active site" description="Proton donor/acceptor" evidence="1">
    <location>
        <position position="121"/>
    </location>
</feature>
<feature type="active site" description="Schiff-base intermediate with substrate" evidence="1">
    <location>
        <position position="146"/>
    </location>
</feature>
<feature type="binding site" evidence="1">
    <location>
        <begin position="33"/>
        <end position="35"/>
    </location>
    <ligand>
        <name>3-dehydroquinate</name>
        <dbReference type="ChEBI" id="CHEBI:32364"/>
    </ligand>
</feature>
<feature type="binding site" evidence="1">
    <location>
        <position position="65"/>
    </location>
    <ligand>
        <name>3-dehydroquinate</name>
        <dbReference type="ChEBI" id="CHEBI:32364"/>
    </ligand>
</feature>
<feature type="binding site" evidence="1">
    <location>
        <position position="188"/>
    </location>
    <ligand>
        <name>3-dehydroquinate</name>
        <dbReference type="ChEBI" id="CHEBI:32364"/>
    </ligand>
</feature>
<feature type="binding site" evidence="1">
    <location>
        <position position="207"/>
    </location>
    <ligand>
        <name>3-dehydroquinate</name>
        <dbReference type="ChEBI" id="CHEBI:32364"/>
    </ligand>
</feature>
<feature type="binding site" evidence="1">
    <location>
        <position position="211"/>
    </location>
    <ligand>
        <name>3-dehydroquinate</name>
        <dbReference type="ChEBI" id="CHEBI:32364"/>
    </ligand>
</feature>
<gene>
    <name evidence="1" type="primary">aroD</name>
    <name type="ordered locus">LACR_1805</name>
</gene>
<name>AROD_LACLS</name>
<dbReference type="EC" id="4.2.1.10" evidence="1"/>
<dbReference type="EMBL" id="CP000425">
    <property type="protein sequence ID" value="ABJ73298.1"/>
    <property type="molecule type" value="Genomic_DNA"/>
</dbReference>
<dbReference type="RefSeq" id="WP_011676546.1">
    <property type="nucleotide sequence ID" value="NC_008527.1"/>
</dbReference>
<dbReference type="SMR" id="Q02XM4"/>
<dbReference type="KEGG" id="llc:LACR_1805"/>
<dbReference type="HOGENOM" id="CLU_064444_0_0_9"/>
<dbReference type="UniPathway" id="UPA00053">
    <property type="reaction ID" value="UER00086"/>
</dbReference>
<dbReference type="Proteomes" id="UP000000240">
    <property type="component" value="Chromosome"/>
</dbReference>
<dbReference type="GO" id="GO:0003855">
    <property type="term" value="F:3-dehydroquinate dehydratase activity"/>
    <property type="evidence" value="ECO:0007669"/>
    <property type="project" value="UniProtKB-UniRule"/>
</dbReference>
<dbReference type="GO" id="GO:0046279">
    <property type="term" value="P:3,4-dihydroxybenzoate biosynthetic process"/>
    <property type="evidence" value="ECO:0007669"/>
    <property type="project" value="TreeGrafter"/>
</dbReference>
<dbReference type="GO" id="GO:0008652">
    <property type="term" value="P:amino acid biosynthetic process"/>
    <property type="evidence" value="ECO:0007669"/>
    <property type="project" value="UniProtKB-KW"/>
</dbReference>
<dbReference type="GO" id="GO:0009073">
    <property type="term" value="P:aromatic amino acid family biosynthetic process"/>
    <property type="evidence" value="ECO:0007669"/>
    <property type="project" value="UniProtKB-KW"/>
</dbReference>
<dbReference type="GO" id="GO:0009423">
    <property type="term" value="P:chorismate biosynthetic process"/>
    <property type="evidence" value="ECO:0007669"/>
    <property type="project" value="UniProtKB-UniRule"/>
</dbReference>
<dbReference type="CDD" id="cd00502">
    <property type="entry name" value="DHQase_I"/>
    <property type="match status" value="1"/>
</dbReference>
<dbReference type="FunFam" id="3.20.20.70:FF:000047">
    <property type="entry name" value="3-dehydroquinate dehydratase"/>
    <property type="match status" value="1"/>
</dbReference>
<dbReference type="Gene3D" id="3.20.20.70">
    <property type="entry name" value="Aldolase class I"/>
    <property type="match status" value="1"/>
</dbReference>
<dbReference type="HAMAP" id="MF_00214">
    <property type="entry name" value="AroD"/>
    <property type="match status" value="1"/>
</dbReference>
<dbReference type="InterPro" id="IPR013785">
    <property type="entry name" value="Aldolase_TIM"/>
</dbReference>
<dbReference type="InterPro" id="IPR001381">
    <property type="entry name" value="DHquinase_I"/>
</dbReference>
<dbReference type="InterPro" id="IPR050146">
    <property type="entry name" value="Type-I_3-dehydroquinase"/>
</dbReference>
<dbReference type="NCBIfam" id="TIGR01093">
    <property type="entry name" value="aroD"/>
    <property type="match status" value="1"/>
</dbReference>
<dbReference type="PANTHER" id="PTHR43699">
    <property type="entry name" value="3-DEHYDROQUINATE DEHYDRATASE"/>
    <property type="match status" value="1"/>
</dbReference>
<dbReference type="PANTHER" id="PTHR43699:SF1">
    <property type="entry name" value="3-DEHYDROQUINATE DEHYDRATASE"/>
    <property type="match status" value="1"/>
</dbReference>
<dbReference type="Pfam" id="PF01487">
    <property type="entry name" value="DHquinase_I"/>
    <property type="match status" value="1"/>
</dbReference>
<dbReference type="SUPFAM" id="SSF51569">
    <property type="entry name" value="Aldolase"/>
    <property type="match status" value="1"/>
</dbReference>
<accession>Q02XM4</accession>
<evidence type="ECO:0000255" key="1">
    <source>
        <dbReference type="HAMAP-Rule" id="MF_00214"/>
    </source>
</evidence>
<reference key="1">
    <citation type="journal article" date="2006" name="Proc. Natl. Acad. Sci. U.S.A.">
        <title>Comparative genomics of the lactic acid bacteria.</title>
        <authorList>
            <person name="Makarova K.S."/>
            <person name="Slesarev A."/>
            <person name="Wolf Y.I."/>
            <person name="Sorokin A."/>
            <person name="Mirkin B."/>
            <person name="Koonin E.V."/>
            <person name="Pavlov A."/>
            <person name="Pavlova N."/>
            <person name="Karamychev V."/>
            <person name="Polouchine N."/>
            <person name="Shakhova V."/>
            <person name="Grigoriev I."/>
            <person name="Lou Y."/>
            <person name="Rohksar D."/>
            <person name="Lucas S."/>
            <person name="Huang K."/>
            <person name="Goodstein D.M."/>
            <person name="Hawkins T."/>
            <person name="Plengvidhya V."/>
            <person name="Welker D."/>
            <person name="Hughes J."/>
            <person name="Goh Y."/>
            <person name="Benson A."/>
            <person name="Baldwin K."/>
            <person name="Lee J.-H."/>
            <person name="Diaz-Muniz I."/>
            <person name="Dosti B."/>
            <person name="Smeianov V."/>
            <person name="Wechter W."/>
            <person name="Barabote R."/>
            <person name="Lorca G."/>
            <person name="Altermann E."/>
            <person name="Barrangou R."/>
            <person name="Ganesan B."/>
            <person name="Xie Y."/>
            <person name="Rawsthorne H."/>
            <person name="Tamir D."/>
            <person name="Parker C."/>
            <person name="Breidt F."/>
            <person name="Broadbent J.R."/>
            <person name="Hutkins R."/>
            <person name="O'Sullivan D."/>
            <person name="Steele J."/>
            <person name="Unlu G."/>
            <person name="Saier M.H. Jr."/>
            <person name="Klaenhammer T."/>
            <person name="Richardson P."/>
            <person name="Kozyavkin S."/>
            <person name="Weimer B.C."/>
            <person name="Mills D.A."/>
        </authorList>
    </citation>
    <scope>NUCLEOTIDE SEQUENCE [LARGE SCALE GENOMIC DNA]</scope>
    <source>
        <strain>SK11</strain>
    </source>
</reference>
<keyword id="KW-0028">Amino-acid biosynthesis</keyword>
<keyword id="KW-0057">Aromatic amino acid biosynthesis</keyword>
<keyword id="KW-0456">Lyase</keyword>
<keyword id="KW-0704">Schiff base</keyword>
<organism>
    <name type="scientific">Lactococcus lactis subsp. cremoris (strain SK11)</name>
    <dbReference type="NCBI Taxonomy" id="272622"/>
    <lineage>
        <taxon>Bacteria</taxon>
        <taxon>Bacillati</taxon>
        <taxon>Bacillota</taxon>
        <taxon>Bacilli</taxon>
        <taxon>Lactobacillales</taxon>
        <taxon>Streptococcaceae</taxon>
        <taxon>Lactococcus</taxon>
        <taxon>Lactococcus cremoris subsp. cremoris</taxon>
    </lineage>
</organism>